<protein>
    <recommendedName>
        <fullName>Uncharacterized protein MJ1520</fullName>
    </recommendedName>
</protein>
<reference key="1">
    <citation type="journal article" date="1996" name="Science">
        <title>Complete genome sequence of the methanogenic archaeon, Methanococcus jannaschii.</title>
        <authorList>
            <person name="Bult C.J."/>
            <person name="White O."/>
            <person name="Olsen G.J."/>
            <person name="Zhou L."/>
            <person name="Fleischmann R.D."/>
            <person name="Sutton G.G."/>
            <person name="Blake J.A."/>
            <person name="FitzGerald L.M."/>
            <person name="Clayton R.A."/>
            <person name="Gocayne J.D."/>
            <person name="Kerlavage A.R."/>
            <person name="Dougherty B.A."/>
            <person name="Tomb J.-F."/>
            <person name="Adams M.D."/>
            <person name="Reich C.I."/>
            <person name="Overbeek R."/>
            <person name="Kirkness E.F."/>
            <person name="Weinstock K.G."/>
            <person name="Merrick J.M."/>
            <person name="Glodek A."/>
            <person name="Scott J.L."/>
            <person name="Geoghagen N.S.M."/>
            <person name="Weidman J.F."/>
            <person name="Fuhrmann J.L."/>
            <person name="Nguyen D."/>
            <person name="Utterback T.R."/>
            <person name="Kelley J.M."/>
            <person name="Peterson J.D."/>
            <person name="Sadow P.W."/>
            <person name="Hanna M.C."/>
            <person name="Cotton M.D."/>
            <person name="Roberts K.M."/>
            <person name="Hurst M.A."/>
            <person name="Kaine B.P."/>
            <person name="Borodovsky M."/>
            <person name="Klenk H.-P."/>
            <person name="Fraser C.M."/>
            <person name="Smith H.O."/>
            <person name="Woese C.R."/>
            <person name="Venter J.C."/>
        </authorList>
    </citation>
    <scope>NUCLEOTIDE SEQUENCE [LARGE SCALE GENOMIC DNA]</scope>
    <source>
        <strain>ATCC 43067 / DSM 2661 / JAL-1 / JCM 10045 / NBRC 100440</strain>
    </source>
</reference>
<proteinExistence type="inferred from homology"/>
<dbReference type="EMBL" id="L77117">
    <property type="protein sequence ID" value="AAB99539.1"/>
    <property type="molecule type" value="Genomic_DNA"/>
</dbReference>
<dbReference type="PIR" id="G64489">
    <property type="entry name" value="G64489"/>
</dbReference>
<dbReference type="RefSeq" id="WP_010871044.1">
    <property type="nucleotide sequence ID" value="NC_000909.1"/>
</dbReference>
<dbReference type="SMR" id="Q58915"/>
<dbReference type="FunCoup" id="Q58915">
    <property type="interactions" value="66"/>
</dbReference>
<dbReference type="STRING" id="243232.MJ_1520"/>
<dbReference type="PaxDb" id="243232-MJ_1520"/>
<dbReference type="EnsemblBacteria" id="AAB99539">
    <property type="protein sequence ID" value="AAB99539"/>
    <property type="gene ID" value="MJ_1520"/>
</dbReference>
<dbReference type="GeneID" id="1452428"/>
<dbReference type="KEGG" id="mja:MJ_1520"/>
<dbReference type="eggNOG" id="arCOG00570">
    <property type="taxonomic scope" value="Archaea"/>
</dbReference>
<dbReference type="HOGENOM" id="CLU_024648_0_1_2"/>
<dbReference type="InParanoid" id="Q58915"/>
<dbReference type="OrthoDB" id="46008at2157"/>
<dbReference type="PhylomeDB" id="Q58915"/>
<dbReference type="Proteomes" id="UP000000805">
    <property type="component" value="Chromosome"/>
</dbReference>
<dbReference type="GO" id="GO:0071949">
    <property type="term" value="F:FAD binding"/>
    <property type="evidence" value="ECO:0007669"/>
    <property type="project" value="InterPro"/>
</dbReference>
<dbReference type="GO" id="GO:0016628">
    <property type="term" value="F:oxidoreductase activity, acting on the CH-CH group of donors, NAD or NADP as acceptor"/>
    <property type="evidence" value="ECO:0007669"/>
    <property type="project" value="InterPro"/>
</dbReference>
<dbReference type="Gene3D" id="3.30.9.10">
    <property type="entry name" value="D-Amino Acid Oxidase, subunit A, domain 2"/>
    <property type="match status" value="1"/>
</dbReference>
<dbReference type="Gene3D" id="3.50.50.60">
    <property type="entry name" value="FAD/NAD(P)-binding domain"/>
    <property type="match status" value="1"/>
</dbReference>
<dbReference type="InterPro" id="IPR002938">
    <property type="entry name" value="FAD-bd"/>
</dbReference>
<dbReference type="InterPro" id="IPR036188">
    <property type="entry name" value="FAD/NAD-bd_sf"/>
</dbReference>
<dbReference type="InterPro" id="IPR011777">
    <property type="entry name" value="Geranylgeranyl_Rdtase_fam"/>
</dbReference>
<dbReference type="InterPro" id="IPR050407">
    <property type="entry name" value="Geranylgeranyl_reductase"/>
</dbReference>
<dbReference type="NCBIfam" id="TIGR02032">
    <property type="entry name" value="GG-red-SF"/>
    <property type="match status" value="1"/>
</dbReference>
<dbReference type="PANTHER" id="PTHR42685:SF18">
    <property type="entry name" value="DIGERANYLGERANYLGLYCEROPHOSPHOLIPID REDUCTASE"/>
    <property type="match status" value="1"/>
</dbReference>
<dbReference type="PANTHER" id="PTHR42685">
    <property type="entry name" value="GERANYLGERANYL DIPHOSPHATE REDUCTASE"/>
    <property type="match status" value="1"/>
</dbReference>
<dbReference type="Pfam" id="PF01494">
    <property type="entry name" value="FAD_binding_3"/>
    <property type="match status" value="1"/>
</dbReference>
<dbReference type="PRINTS" id="PR00420">
    <property type="entry name" value="RNGMNOXGNASE"/>
</dbReference>
<dbReference type="SUPFAM" id="SSF51905">
    <property type="entry name" value="FAD/NAD(P)-binding domain"/>
    <property type="match status" value="1"/>
</dbReference>
<keyword id="KW-1185">Reference proteome</keyword>
<evidence type="ECO:0000305" key="1"/>
<gene>
    <name type="ordered locus">MJ1520</name>
</gene>
<name>Y1520_METJA</name>
<comment type="similarity">
    <text evidence="1">Belongs to the geranylgeranyl reductase family. ChlP subfamily.</text>
</comment>
<organism>
    <name type="scientific">Methanocaldococcus jannaschii (strain ATCC 43067 / DSM 2661 / JAL-1 / JCM 10045 / NBRC 100440)</name>
    <name type="common">Methanococcus jannaschii</name>
    <dbReference type="NCBI Taxonomy" id="243232"/>
    <lineage>
        <taxon>Archaea</taxon>
        <taxon>Methanobacteriati</taxon>
        <taxon>Methanobacteriota</taxon>
        <taxon>Methanomada group</taxon>
        <taxon>Methanococci</taxon>
        <taxon>Methanococcales</taxon>
        <taxon>Methanocaldococcaceae</taxon>
        <taxon>Methanocaldococcus</taxon>
    </lineage>
</organism>
<feature type="chain" id="PRO_0000219666" description="Uncharacterized protein MJ1520">
    <location>
        <begin position="1"/>
        <end position="387"/>
    </location>
</feature>
<sequence length="387" mass="43299">MNRNDYDVVIIGGGPVGCITGEYIKNGRVLIVEEHQSIGVPLQCAGLISKNGVKELGNPKGVVNKVRGAYIYSKNSMVKIGNEGIRAYIFERKVMDKDIAIRAAKKCDFLLKAYGKIEKDKNGYKVEITHLGEKITLNPKIIVGADGAKTITGKKLGLVNNKNREILSSCQFEMVNAEVDDDFVYIFLDRKYSERFFTWIIPMGKDRVRVGLIDRGNCYNKLIRFINENKIAKEILKNATITEFSTGSLPIGYLDKTFKDNVLLVGDAACHVKPLSGGGLYFGAMGGKIAGEVISKYLNEDIENLELYDKRWKETFGSEIKNGLRVRKLFLKLGNDTLDKIIEKLSKSDLIDYINKHGDMDRQASLSIKVLKSLDIGLGFRILRDLL</sequence>
<accession>Q58915</accession>